<proteinExistence type="inferred from homology"/>
<organism>
    <name type="scientific">Salmonella gallinarum (strain 287/91 / NCTC 13346)</name>
    <dbReference type="NCBI Taxonomy" id="550538"/>
    <lineage>
        <taxon>Bacteria</taxon>
        <taxon>Pseudomonadati</taxon>
        <taxon>Pseudomonadota</taxon>
        <taxon>Gammaproteobacteria</taxon>
        <taxon>Enterobacterales</taxon>
        <taxon>Enterobacteriaceae</taxon>
        <taxon>Salmonella</taxon>
    </lineage>
</organism>
<name>QUEA_SALG2</name>
<feature type="chain" id="PRO_1000094812" description="S-adenosylmethionine:tRNA ribosyltransferase-isomerase">
    <location>
        <begin position="1"/>
        <end position="354"/>
    </location>
</feature>
<evidence type="ECO:0000255" key="1">
    <source>
        <dbReference type="HAMAP-Rule" id="MF_00113"/>
    </source>
</evidence>
<accession>B5R6Q6</accession>
<keyword id="KW-0963">Cytoplasm</keyword>
<keyword id="KW-0671">Queuosine biosynthesis</keyword>
<keyword id="KW-0949">S-adenosyl-L-methionine</keyword>
<keyword id="KW-0808">Transferase</keyword>
<comment type="function">
    <text evidence="1">Transfers and isomerizes the ribose moiety from AdoMet to the 7-aminomethyl group of 7-deazaguanine (preQ1-tRNA) to give epoxyqueuosine (oQ-tRNA).</text>
</comment>
<comment type="catalytic activity">
    <reaction evidence="1">
        <text>7-aminomethyl-7-carbaguanosine(34) in tRNA + S-adenosyl-L-methionine = epoxyqueuosine(34) in tRNA + adenine + L-methionine + 2 H(+)</text>
        <dbReference type="Rhea" id="RHEA:32155"/>
        <dbReference type="Rhea" id="RHEA-COMP:10342"/>
        <dbReference type="Rhea" id="RHEA-COMP:18582"/>
        <dbReference type="ChEBI" id="CHEBI:15378"/>
        <dbReference type="ChEBI" id="CHEBI:16708"/>
        <dbReference type="ChEBI" id="CHEBI:57844"/>
        <dbReference type="ChEBI" id="CHEBI:59789"/>
        <dbReference type="ChEBI" id="CHEBI:82833"/>
        <dbReference type="ChEBI" id="CHEBI:194443"/>
        <dbReference type="EC" id="2.4.99.17"/>
    </reaction>
</comment>
<comment type="pathway">
    <text evidence="1">tRNA modification; tRNA-queuosine biosynthesis.</text>
</comment>
<comment type="subunit">
    <text evidence="1">Monomer.</text>
</comment>
<comment type="subcellular location">
    <subcellularLocation>
        <location evidence="1">Cytoplasm</location>
    </subcellularLocation>
</comment>
<comment type="similarity">
    <text evidence="1">Belongs to the QueA family.</text>
</comment>
<reference key="1">
    <citation type="journal article" date="2008" name="Genome Res.">
        <title>Comparative genome analysis of Salmonella enteritidis PT4 and Salmonella gallinarum 287/91 provides insights into evolutionary and host adaptation pathways.</title>
        <authorList>
            <person name="Thomson N.R."/>
            <person name="Clayton D.J."/>
            <person name="Windhorst D."/>
            <person name="Vernikos G."/>
            <person name="Davidson S."/>
            <person name="Churcher C."/>
            <person name="Quail M.A."/>
            <person name="Stevens M."/>
            <person name="Jones M.A."/>
            <person name="Watson M."/>
            <person name="Barron A."/>
            <person name="Layton A."/>
            <person name="Pickard D."/>
            <person name="Kingsley R.A."/>
            <person name="Bignell A."/>
            <person name="Clark L."/>
            <person name="Harris B."/>
            <person name="Ormond D."/>
            <person name="Abdellah Z."/>
            <person name="Brooks K."/>
            <person name="Cherevach I."/>
            <person name="Chillingworth T."/>
            <person name="Woodward J."/>
            <person name="Norberczak H."/>
            <person name="Lord A."/>
            <person name="Arrowsmith C."/>
            <person name="Jagels K."/>
            <person name="Moule S."/>
            <person name="Mungall K."/>
            <person name="Saunders M."/>
            <person name="Whitehead S."/>
            <person name="Chabalgoity J.A."/>
            <person name="Maskell D."/>
            <person name="Humphreys T."/>
            <person name="Roberts M."/>
            <person name="Barrow P.A."/>
            <person name="Dougan G."/>
            <person name="Parkhill J."/>
        </authorList>
    </citation>
    <scope>NUCLEOTIDE SEQUENCE [LARGE SCALE GENOMIC DNA]</scope>
    <source>
        <strain>287/91 / NCTC 13346</strain>
    </source>
</reference>
<protein>
    <recommendedName>
        <fullName evidence="1">S-adenosylmethionine:tRNA ribosyltransferase-isomerase</fullName>
        <ecNumber evidence="1">2.4.99.17</ecNumber>
    </recommendedName>
    <alternativeName>
        <fullName evidence="1">Queuosine biosynthesis protein QueA</fullName>
    </alternativeName>
</protein>
<sequence>MRVTDFSFELPESLIAHYPQPERSRCRLLSLEGPTGALTHGTFTDLLDKLNPGDLLVFNNTRVIPARLFGRKASGGKIEVLVERMLDDKRILAHIRASKAPKPGTELLLGDDESIHATMTARHGALFEVEFNDPRPVLDILNAIGHMPLPPYIDRPDEDADRELYQTVYSEKPGAVAAPTAGLHFDEPLLAALREKGIEMAFVTLHVGAGTFQPVRVDTIEDHIMHSEYAEVPQEVVDAVLAAKARGNRVIAVGTTSVRSLESAAQAAKNDLIEPLFGDTQIFIYPGYQYKVIDALITNFHLPESTLIMLVSAFAGYQHTMNAYKTAVEQKYRFFSYGDAMFITYNPQAISERP</sequence>
<gene>
    <name evidence="1" type="primary">queA</name>
    <name type="ordered locus">SG0416</name>
</gene>
<dbReference type="EC" id="2.4.99.17" evidence="1"/>
<dbReference type="EMBL" id="AM933173">
    <property type="protein sequence ID" value="CAR36315.1"/>
    <property type="molecule type" value="Genomic_DNA"/>
</dbReference>
<dbReference type="RefSeq" id="WP_001266523.1">
    <property type="nucleotide sequence ID" value="NC_011274.1"/>
</dbReference>
<dbReference type="SMR" id="B5R6Q6"/>
<dbReference type="KEGG" id="seg:SG0416"/>
<dbReference type="HOGENOM" id="CLU_039110_1_0_6"/>
<dbReference type="UniPathway" id="UPA00392"/>
<dbReference type="Proteomes" id="UP000008321">
    <property type="component" value="Chromosome"/>
</dbReference>
<dbReference type="GO" id="GO:0005737">
    <property type="term" value="C:cytoplasm"/>
    <property type="evidence" value="ECO:0007669"/>
    <property type="project" value="UniProtKB-SubCell"/>
</dbReference>
<dbReference type="GO" id="GO:0051075">
    <property type="term" value="F:S-adenosylmethionine:tRNA ribosyltransferase-isomerase activity"/>
    <property type="evidence" value="ECO:0007669"/>
    <property type="project" value="UniProtKB-EC"/>
</dbReference>
<dbReference type="GO" id="GO:0008616">
    <property type="term" value="P:queuosine biosynthetic process"/>
    <property type="evidence" value="ECO:0007669"/>
    <property type="project" value="UniProtKB-UniRule"/>
</dbReference>
<dbReference type="GO" id="GO:0002099">
    <property type="term" value="P:tRNA wobble guanine modification"/>
    <property type="evidence" value="ECO:0007669"/>
    <property type="project" value="TreeGrafter"/>
</dbReference>
<dbReference type="FunFam" id="2.40.10.240:FF:000001">
    <property type="entry name" value="S-adenosylmethionine:tRNA ribosyltransferase-isomerase"/>
    <property type="match status" value="1"/>
</dbReference>
<dbReference type="FunFam" id="3.40.1780.10:FF:000001">
    <property type="entry name" value="S-adenosylmethionine:tRNA ribosyltransferase-isomerase"/>
    <property type="match status" value="1"/>
</dbReference>
<dbReference type="Gene3D" id="2.40.10.240">
    <property type="entry name" value="QueA-like"/>
    <property type="match status" value="1"/>
</dbReference>
<dbReference type="Gene3D" id="3.40.1780.10">
    <property type="entry name" value="QueA-like"/>
    <property type="match status" value="1"/>
</dbReference>
<dbReference type="HAMAP" id="MF_00113">
    <property type="entry name" value="QueA"/>
    <property type="match status" value="1"/>
</dbReference>
<dbReference type="InterPro" id="IPR003699">
    <property type="entry name" value="QueA"/>
</dbReference>
<dbReference type="InterPro" id="IPR042118">
    <property type="entry name" value="QueA_dom1"/>
</dbReference>
<dbReference type="InterPro" id="IPR042119">
    <property type="entry name" value="QueA_dom2"/>
</dbReference>
<dbReference type="InterPro" id="IPR036100">
    <property type="entry name" value="QueA_sf"/>
</dbReference>
<dbReference type="NCBIfam" id="NF001140">
    <property type="entry name" value="PRK00147.1"/>
    <property type="match status" value="1"/>
</dbReference>
<dbReference type="NCBIfam" id="TIGR00113">
    <property type="entry name" value="queA"/>
    <property type="match status" value="1"/>
</dbReference>
<dbReference type="PANTHER" id="PTHR30307">
    <property type="entry name" value="S-ADENOSYLMETHIONINE:TRNA RIBOSYLTRANSFERASE-ISOMERASE"/>
    <property type="match status" value="1"/>
</dbReference>
<dbReference type="PANTHER" id="PTHR30307:SF0">
    <property type="entry name" value="S-ADENOSYLMETHIONINE:TRNA RIBOSYLTRANSFERASE-ISOMERASE"/>
    <property type="match status" value="1"/>
</dbReference>
<dbReference type="Pfam" id="PF02547">
    <property type="entry name" value="Queuosine_synth"/>
    <property type="match status" value="1"/>
</dbReference>
<dbReference type="SUPFAM" id="SSF111337">
    <property type="entry name" value="QueA-like"/>
    <property type="match status" value="1"/>
</dbReference>